<proteinExistence type="inferred from homology"/>
<keyword id="KW-1015">Disulfide bond</keyword>
<keyword id="KW-0256">Endoplasmic reticulum</keyword>
<keyword id="KW-0325">Glycoprotein</keyword>
<keyword id="KW-0430">Lectin</keyword>
<keyword id="KW-0472">Membrane</keyword>
<keyword id="KW-1185">Reference proteome</keyword>
<keyword id="KW-0732">Signal</keyword>
<dbReference type="EMBL" id="CU329670">
    <property type="protein sequence ID" value="CAB61460.3"/>
    <property type="molecule type" value="Genomic_DNA"/>
</dbReference>
<dbReference type="PIR" id="T50167">
    <property type="entry name" value="T50167"/>
</dbReference>
<dbReference type="RefSeq" id="NP_592965.3">
    <property type="nucleotide sequence ID" value="NM_001018365.3"/>
</dbReference>
<dbReference type="BioGRID" id="277961">
    <property type="interactions" value="10"/>
</dbReference>
<dbReference type="FunCoup" id="Q9UTC8">
    <property type="interactions" value="121"/>
</dbReference>
<dbReference type="STRING" id="284812.Q9UTC8"/>
<dbReference type="GlyCosmos" id="Q9UTC8">
    <property type="glycosylation" value="4 sites, No reported glycans"/>
</dbReference>
<dbReference type="PaxDb" id="4896-SPAC227.11c.1"/>
<dbReference type="EnsemblFungi" id="SPAC227.11c.1">
    <property type="protein sequence ID" value="SPAC227.11c.1:pep"/>
    <property type="gene ID" value="SPAC227.11c"/>
</dbReference>
<dbReference type="GeneID" id="2541459"/>
<dbReference type="KEGG" id="spo:2541459"/>
<dbReference type="PomBase" id="SPAC227.11c">
    <property type="gene designation" value="yos9"/>
</dbReference>
<dbReference type="VEuPathDB" id="FungiDB:SPAC227.11c"/>
<dbReference type="eggNOG" id="KOG3394">
    <property type="taxonomic scope" value="Eukaryota"/>
</dbReference>
<dbReference type="HOGENOM" id="CLU_078323_0_0_1"/>
<dbReference type="InParanoid" id="Q9UTC8"/>
<dbReference type="OMA" id="SMTIHVP"/>
<dbReference type="Reactome" id="R-SPO-5358346">
    <property type="pathway name" value="Hedgehog ligand biogenesis"/>
</dbReference>
<dbReference type="PRO" id="PR:Q9UTC8"/>
<dbReference type="Proteomes" id="UP000002485">
    <property type="component" value="Chromosome I"/>
</dbReference>
<dbReference type="GO" id="GO:0005788">
    <property type="term" value="C:endoplasmic reticulum lumen"/>
    <property type="evidence" value="ECO:0000318"/>
    <property type="project" value="GO_Central"/>
</dbReference>
<dbReference type="GO" id="GO:0005789">
    <property type="term" value="C:endoplasmic reticulum membrane"/>
    <property type="evidence" value="ECO:0007669"/>
    <property type="project" value="UniProtKB-SubCell"/>
</dbReference>
<dbReference type="GO" id="GO:0030246">
    <property type="term" value="F:carbohydrate binding"/>
    <property type="evidence" value="ECO:0007669"/>
    <property type="project" value="UniProtKB-KW"/>
</dbReference>
<dbReference type="GO" id="GO:0030968">
    <property type="term" value="P:endoplasmic reticulum unfolded protein response"/>
    <property type="evidence" value="ECO:0000266"/>
    <property type="project" value="PomBase"/>
</dbReference>
<dbReference type="GO" id="GO:0030970">
    <property type="term" value="P:retrograde protein transport, ER to cytosol"/>
    <property type="evidence" value="ECO:0000318"/>
    <property type="project" value="GO_Central"/>
</dbReference>
<dbReference type="Gene3D" id="2.70.130.10">
    <property type="entry name" value="Mannose-6-phosphate receptor binding domain"/>
    <property type="match status" value="1"/>
</dbReference>
<dbReference type="InterPro" id="IPR009011">
    <property type="entry name" value="Man6P_isomerase_rcpt-bd_dom_sf"/>
</dbReference>
<dbReference type="InterPro" id="IPR044865">
    <property type="entry name" value="MRH_dom"/>
</dbReference>
<dbReference type="InterPro" id="IPR045149">
    <property type="entry name" value="OS-9-like"/>
</dbReference>
<dbReference type="InterPro" id="IPR012913">
    <property type="entry name" value="OS9-like_dom"/>
</dbReference>
<dbReference type="PANTHER" id="PTHR15414:SF0">
    <property type="entry name" value="ENDOPLASMIC RETICULUM LECTIN 1"/>
    <property type="match status" value="1"/>
</dbReference>
<dbReference type="PANTHER" id="PTHR15414">
    <property type="entry name" value="OS-9-RELATED"/>
    <property type="match status" value="1"/>
</dbReference>
<dbReference type="Pfam" id="PF07915">
    <property type="entry name" value="PRKCSH"/>
    <property type="match status" value="1"/>
</dbReference>
<dbReference type="SUPFAM" id="SSF50911">
    <property type="entry name" value="Mannose 6-phosphate receptor domain"/>
    <property type="match status" value="1"/>
</dbReference>
<dbReference type="PROSITE" id="PS51914">
    <property type="entry name" value="MRH"/>
    <property type="match status" value="1"/>
</dbReference>
<gene>
    <name type="primary">yos9</name>
    <name type="ORF">SPAC227.11c</name>
</gene>
<protein>
    <recommendedName>
        <fullName>Protein OS-9 homolog</fullName>
    </recommendedName>
</protein>
<evidence type="ECO:0000250" key="1"/>
<evidence type="ECO:0000250" key="2">
    <source>
        <dbReference type="UniProtKB" id="Q13438"/>
    </source>
</evidence>
<evidence type="ECO:0000255" key="3"/>
<evidence type="ECO:0000255" key="4">
    <source>
        <dbReference type="PROSITE-ProRule" id="PRU01262"/>
    </source>
</evidence>
<evidence type="ECO:0000256" key="5">
    <source>
        <dbReference type="SAM" id="MobiDB-lite"/>
    </source>
</evidence>
<evidence type="ECO:0000305" key="6"/>
<comment type="function">
    <text evidence="1">Lectin involved in the quality control of the secretory pathway. As a member of the endoplasmic reticulum-associated degradation lumenal (ERAD-L) surveillance system, targets misfolded endoplasmic reticulum lumenal glycoproteins for degradation (By similarity).</text>
</comment>
<comment type="subunit">
    <text evidence="1">Interacts with missfolded ER lumenal proteins.</text>
</comment>
<comment type="subcellular location">
    <subcellularLocation>
        <location evidence="1">Endoplasmic reticulum membrane</location>
        <topology evidence="1">Peripheral membrane protein</topology>
        <orientation evidence="1">Lumenal side</orientation>
    </subcellularLocation>
</comment>
<comment type="similarity">
    <text evidence="6">Belongs to the OS-9 family.</text>
</comment>
<organism>
    <name type="scientific">Schizosaccharomyces pombe (strain 972 / ATCC 24843)</name>
    <name type="common">Fission yeast</name>
    <dbReference type="NCBI Taxonomy" id="284812"/>
    <lineage>
        <taxon>Eukaryota</taxon>
        <taxon>Fungi</taxon>
        <taxon>Dikarya</taxon>
        <taxon>Ascomycota</taxon>
        <taxon>Taphrinomycotina</taxon>
        <taxon>Schizosaccharomycetes</taxon>
        <taxon>Schizosaccharomycetales</taxon>
        <taxon>Schizosaccharomycetaceae</taxon>
        <taxon>Schizosaccharomyces</taxon>
    </lineage>
</organism>
<accession>Q9UTC8</accession>
<reference key="1">
    <citation type="journal article" date="2002" name="Nature">
        <title>The genome sequence of Schizosaccharomyces pombe.</title>
        <authorList>
            <person name="Wood V."/>
            <person name="Gwilliam R."/>
            <person name="Rajandream M.A."/>
            <person name="Lyne M.H."/>
            <person name="Lyne R."/>
            <person name="Stewart A."/>
            <person name="Sgouros J.G."/>
            <person name="Peat N."/>
            <person name="Hayles J."/>
            <person name="Baker S.G."/>
            <person name="Basham D."/>
            <person name="Bowman S."/>
            <person name="Brooks K."/>
            <person name="Brown D."/>
            <person name="Brown S."/>
            <person name="Chillingworth T."/>
            <person name="Churcher C.M."/>
            <person name="Collins M."/>
            <person name="Connor R."/>
            <person name="Cronin A."/>
            <person name="Davis P."/>
            <person name="Feltwell T."/>
            <person name="Fraser A."/>
            <person name="Gentles S."/>
            <person name="Goble A."/>
            <person name="Hamlin N."/>
            <person name="Harris D.E."/>
            <person name="Hidalgo J."/>
            <person name="Hodgson G."/>
            <person name="Holroyd S."/>
            <person name="Hornsby T."/>
            <person name="Howarth S."/>
            <person name="Huckle E.J."/>
            <person name="Hunt S."/>
            <person name="Jagels K."/>
            <person name="James K.D."/>
            <person name="Jones L."/>
            <person name="Jones M."/>
            <person name="Leather S."/>
            <person name="McDonald S."/>
            <person name="McLean J."/>
            <person name="Mooney P."/>
            <person name="Moule S."/>
            <person name="Mungall K.L."/>
            <person name="Murphy L.D."/>
            <person name="Niblett D."/>
            <person name="Odell C."/>
            <person name="Oliver K."/>
            <person name="O'Neil S."/>
            <person name="Pearson D."/>
            <person name="Quail M.A."/>
            <person name="Rabbinowitsch E."/>
            <person name="Rutherford K.M."/>
            <person name="Rutter S."/>
            <person name="Saunders D."/>
            <person name="Seeger K."/>
            <person name="Sharp S."/>
            <person name="Skelton J."/>
            <person name="Simmonds M.N."/>
            <person name="Squares R."/>
            <person name="Squares S."/>
            <person name="Stevens K."/>
            <person name="Taylor K."/>
            <person name="Taylor R.G."/>
            <person name="Tivey A."/>
            <person name="Walsh S.V."/>
            <person name="Warren T."/>
            <person name="Whitehead S."/>
            <person name="Woodward J.R."/>
            <person name="Volckaert G."/>
            <person name="Aert R."/>
            <person name="Robben J."/>
            <person name="Grymonprez B."/>
            <person name="Weltjens I."/>
            <person name="Vanstreels E."/>
            <person name="Rieger M."/>
            <person name="Schaefer M."/>
            <person name="Mueller-Auer S."/>
            <person name="Gabel C."/>
            <person name="Fuchs M."/>
            <person name="Duesterhoeft A."/>
            <person name="Fritzc C."/>
            <person name="Holzer E."/>
            <person name="Moestl D."/>
            <person name="Hilbert H."/>
            <person name="Borzym K."/>
            <person name="Langer I."/>
            <person name="Beck A."/>
            <person name="Lehrach H."/>
            <person name="Reinhardt R."/>
            <person name="Pohl T.M."/>
            <person name="Eger P."/>
            <person name="Zimmermann W."/>
            <person name="Wedler H."/>
            <person name="Wambutt R."/>
            <person name="Purnelle B."/>
            <person name="Goffeau A."/>
            <person name="Cadieu E."/>
            <person name="Dreano S."/>
            <person name="Gloux S."/>
            <person name="Lelaure V."/>
            <person name="Mottier S."/>
            <person name="Galibert F."/>
            <person name="Aves S.J."/>
            <person name="Xiang Z."/>
            <person name="Hunt C."/>
            <person name="Moore K."/>
            <person name="Hurst S.M."/>
            <person name="Lucas M."/>
            <person name="Rochet M."/>
            <person name="Gaillardin C."/>
            <person name="Tallada V.A."/>
            <person name="Garzon A."/>
            <person name="Thode G."/>
            <person name="Daga R.R."/>
            <person name="Cruzado L."/>
            <person name="Jimenez J."/>
            <person name="Sanchez M."/>
            <person name="del Rey F."/>
            <person name="Benito J."/>
            <person name="Dominguez A."/>
            <person name="Revuelta J.L."/>
            <person name="Moreno S."/>
            <person name="Armstrong J."/>
            <person name="Forsburg S.L."/>
            <person name="Cerutti L."/>
            <person name="Lowe T."/>
            <person name="McCombie W.R."/>
            <person name="Paulsen I."/>
            <person name="Potashkin J."/>
            <person name="Shpakovski G.V."/>
            <person name="Ussery D."/>
            <person name="Barrell B.G."/>
            <person name="Nurse P."/>
        </authorList>
    </citation>
    <scope>NUCLEOTIDE SEQUENCE [LARGE SCALE GENOMIC DNA]</scope>
    <source>
        <strain>972 / ATCC 24843</strain>
    </source>
</reference>
<reference key="2">
    <citation type="journal article" date="2011" name="Science">
        <title>Comparative functional genomics of the fission yeasts.</title>
        <authorList>
            <person name="Rhind N."/>
            <person name="Chen Z."/>
            <person name="Yassour M."/>
            <person name="Thompson D.A."/>
            <person name="Haas B.J."/>
            <person name="Habib N."/>
            <person name="Wapinski I."/>
            <person name="Roy S."/>
            <person name="Lin M.F."/>
            <person name="Heiman D.I."/>
            <person name="Young S.K."/>
            <person name="Furuya K."/>
            <person name="Guo Y."/>
            <person name="Pidoux A."/>
            <person name="Chen H.M."/>
            <person name="Robbertse B."/>
            <person name="Goldberg J.M."/>
            <person name="Aoki K."/>
            <person name="Bayne E.H."/>
            <person name="Berlin A.M."/>
            <person name="Desjardins C.A."/>
            <person name="Dobbs E."/>
            <person name="Dukaj L."/>
            <person name="Fan L."/>
            <person name="FitzGerald M.G."/>
            <person name="French C."/>
            <person name="Gujja S."/>
            <person name="Hansen K."/>
            <person name="Keifenheim D."/>
            <person name="Levin J.Z."/>
            <person name="Mosher R.A."/>
            <person name="Mueller C.A."/>
            <person name="Pfiffner J."/>
            <person name="Priest M."/>
            <person name="Russ C."/>
            <person name="Smialowska A."/>
            <person name="Swoboda P."/>
            <person name="Sykes S.M."/>
            <person name="Vaughn M."/>
            <person name="Vengrova S."/>
            <person name="Yoder R."/>
            <person name="Zeng Q."/>
            <person name="Allshire R."/>
            <person name="Baulcombe D."/>
            <person name="Birren B.W."/>
            <person name="Brown W."/>
            <person name="Ekwall K."/>
            <person name="Kellis M."/>
            <person name="Leatherwood J."/>
            <person name="Levin H."/>
            <person name="Margalit H."/>
            <person name="Martienssen R."/>
            <person name="Nieduszynski C.A."/>
            <person name="Spatafora J.W."/>
            <person name="Friedman N."/>
            <person name="Dalgaard J.Z."/>
            <person name="Baumann P."/>
            <person name="Niki H."/>
            <person name="Regev A."/>
            <person name="Nusbaum C."/>
        </authorList>
    </citation>
    <scope>REVISION OF GENE MODEL</scope>
</reference>
<sequence>MFSSSMFPHLILPAIGSSKVRTMVLPFAFVGFFIFPICLASLLDWNDAYEYPKYSFEWSNVSILEGDIDSIKEKTEKTKLSSLFYAGKHEYFCVYPNASLIKQNSTTEPSYDLQELRIQGTEKINELANVFLIENRGYWTYDYVYGQHVRQYHLEPQQGSDKVLANPMYILGTAPNTQTKKNLEENWAIGFVEGKAYLQTTFRNGTMCDITKRPRHVILSYECSTNSDTPEITQYQEVSSCAYSMTIHVPGLCSLPAFKIQEDIPSEKIVCYNVIKEKSNEVDHKDSQHVVDEVAQTSPPEVKEVETQSS</sequence>
<feature type="signal peptide" evidence="3">
    <location>
        <begin position="1"/>
        <end position="40"/>
    </location>
</feature>
<feature type="chain" id="PRO_0000043274" description="Protein OS-9 homolog">
    <location>
        <begin position="41"/>
        <end position="310"/>
    </location>
</feature>
<feature type="domain" description="MRH" evidence="4">
    <location>
        <begin position="129"/>
        <end position="255"/>
    </location>
</feature>
<feature type="region of interest" description="Disordered" evidence="5">
    <location>
        <begin position="282"/>
        <end position="310"/>
    </location>
</feature>
<feature type="compositionally biased region" description="Basic and acidic residues" evidence="5">
    <location>
        <begin position="282"/>
        <end position="292"/>
    </location>
</feature>
<feature type="compositionally biased region" description="Basic and acidic residues" evidence="5">
    <location>
        <begin position="301"/>
        <end position="310"/>
    </location>
</feature>
<feature type="binding site" evidence="2">
    <location>
        <position position="139"/>
    </location>
    <ligand>
        <name>a mannooligosaccharide derivative</name>
        <dbReference type="ChEBI" id="CHEBI:71274"/>
    </ligand>
</feature>
<feature type="binding site" evidence="2">
    <location>
        <position position="151"/>
    </location>
    <ligand>
        <name>a mannooligosaccharide derivative</name>
        <dbReference type="ChEBI" id="CHEBI:71274"/>
    </ligand>
</feature>
<feature type="binding site" evidence="2">
    <location>
        <position position="209"/>
    </location>
    <ligand>
        <name>a mannooligosaccharide derivative</name>
        <dbReference type="ChEBI" id="CHEBI:71274"/>
    </ligand>
</feature>
<feature type="binding site" evidence="2">
    <location>
        <position position="215"/>
    </location>
    <ligand>
        <name>a mannooligosaccharide derivative</name>
        <dbReference type="ChEBI" id="CHEBI:71274"/>
    </ligand>
</feature>
<feature type="binding site" evidence="2">
    <location>
        <position position="237"/>
    </location>
    <ligand>
        <name>a mannooligosaccharide derivative</name>
        <dbReference type="ChEBI" id="CHEBI:71274"/>
    </ligand>
</feature>
<feature type="binding site" evidence="2">
    <location>
        <position position="243"/>
    </location>
    <ligand>
        <name>a mannooligosaccharide derivative</name>
        <dbReference type="ChEBI" id="CHEBI:71274"/>
    </ligand>
</feature>
<feature type="glycosylation site" description="N-linked (GlcNAc...) asparagine" evidence="3">
    <location>
        <position position="60"/>
    </location>
</feature>
<feature type="glycosylation site" description="N-linked (GlcNAc...) asparagine" evidence="3">
    <location>
        <position position="97"/>
    </location>
</feature>
<feature type="glycosylation site" description="N-linked (GlcNAc...) asparagine" evidence="3">
    <location>
        <position position="104"/>
    </location>
</feature>
<feature type="glycosylation site" description="N-linked (GlcNAc...) asparagine" evidence="3">
    <location>
        <position position="204"/>
    </location>
</feature>
<feature type="disulfide bond" evidence="4">
    <location>
        <begin position="208"/>
        <end position="241"/>
    </location>
</feature>
<feature type="disulfide bond" evidence="4">
    <location>
        <begin position="223"/>
        <end position="253"/>
    </location>
</feature>
<name>OS9_SCHPO</name>